<reference key="1">
    <citation type="journal article" date="1993" name="Antonie Van Leeuwenhoek">
        <title>Phylogenetic relationships of Bacteria based on comparative sequence analysis of elongation factor Tu and ATP-synthase beta-subunit genes.</title>
        <authorList>
            <person name="Ludwig W."/>
            <person name="Neumaier J."/>
            <person name="Klugbauer N."/>
            <person name="Brockmann E."/>
            <person name="Roller C."/>
            <person name="Klugbauer S."/>
            <person name="Reetz K."/>
            <person name="Schachtner I."/>
            <person name="Ludvigsen A."/>
            <person name="Bachleitner M."/>
            <person name="Fischer U."/>
            <person name="Schleifer K.H."/>
        </authorList>
    </citation>
    <scope>NUCLEOTIDE SEQUENCE [GENOMIC DNA]</scope>
    <source>
        <strain>ATCC 27731 / DSM 20475 / VPI 7953</strain>
    </source>
</reference>
<gene>
    <name evidence="1" type="primary">atpD</name>
</gene>
<protein>
    <recommendedName>
        <fullName evidence="1">ATP synthase subunit beta</fullName>
        <ecNumber evidence="1">7.1.2.2</ecNumber>
    </recommendedName>
    <alternativeName>
        <fullName evidence="1">ATP synthase F1 sector subunit beta</fullName>
    </alternativeName>
    <alternativeName>
        <fullName evidence="1">F-ATPase subunit beta</fullName>
    </alternativeName>
</protein>
<name>ATPB_PEPNI</name>
<accession>P42467</accession>
<sequence length="427" mass="46529">MNQGTIIKVVGPVVDVEFPSGLLPNINNALHISSDEQPEDKKTGHDFKVVLEVAEHLGGNIVRAIAMSSTDGLMRGMVVTDQESPITVPVGDATLGRLMNVVGDPIDEAGEVPSETRWPIHRSAPTYVQQNPSKEILETGIKVVDLLCPYVKGGKIGLFGGAGVGKTVLIQELIRNIAYEHGGYSVFAGVGERTREGKDLLVEMRESGVIDKTSLVFGQMNEPPGARMRIALTGLTVAEYFRDEQNQDVLLFIDNIFRFTQAGSEVSALLGRMPSAVGYQPTLATEMGTMQERITSTDKGSITSVQAVYVPADDLTDPAPATTFAHLDATTVLERSISEKGIYPAVDPLASTSRILDPRIVGEEHYEIARDVQEVLQEYRELQDIISILGMDELSDEEKLTVARARRIERFLSQSFFVAEQFTGNPG</sequence>
<comment type="function">
    <text evidence="1">Produces ATP from ADP in the presence of a proton gradient across the membrane. The catalytic sites are hosted primarily by the beta subunits.</text>
</comment>
<comment type="catalytic activity">
    <reaction evidence="1">
        <text>ATP + H2O + 4 H(+)(in) = ADP + phosphate + 5 H(+)(out)</text>
        <dbReference type="Rhea" id="RHEA:57720"/>
        <dbReference type="ChEBI" id="CHEBI:15377"/>
        <dbReference type="ChEBI" id="CHEBI:15378"/>
        <dbReference type="ChEBI" id="CHEBI:30616"/>
        <dbReference type="ChEBI" id="CHEBI:43474"/>
        <dbReference type="ChEBI" id="CHEBI:456216"/>
        <dbReference type="EC" id="7.1.2.2"/>
    </reaction>
</comment>
<comment type="subunit">
    <text evidence="1">F-type ATPases have 2 components, CF(1) - the catalytic core - and CF(0) - the membrane proton channel. CF(1) has five subunits: alpha(3), beta(3), gamma(1), delta(1), epsilon(1). CF(0) has three main subunits: a(1), b(2) and c(9-12). The alpha and beta chains form an alternating ring which encloses part of the gamma chain. CF(1) is attached to CF(0) by a central stalk formed by the gamma and epsilon chains, while a peripheral stalk is formed by the delta and b chains.</text>
</comment>
<comment type="subcellular location">
    <subcellularLocation>
        <location evidence="1">Cell membrane</location>
        <topology evidence="1">Peripheral membrane protein</topology>
    </subcellularLocation>
</comment>
<comment type="similarity">
    <text evidence="1">Belongs to the ATPase alpha/beta chains family.</text>
</comment>
<evidence type="ECO:0000255" key="1">
    <source>
        <dbReference type="HAMAP-Rule" id="MF_01347"/>
    </source>
</evidence>
<organism>
    <name type="scientific">Peptococcus niger</name>
    <dbReference type="NCBI Taxonomy" id="2741"/>
    <lineage>
        <taxon>Bacteria</taxon>
        <taxon>Bacillati</taxon>
        <taxon>Bacillota</taxon>
        <taxon>Clostridia</taxon>
        <taxon>Eubacteriales</taxon>
        <taxon>Peptococcaceae</taxon>
        <taxon>Peptococcus</taxon>
    </lineage>
</organism>
<feature type="chain" id="PRO_0000144459" description="ATP synthase subunit beta">
    <location>
        <begin position="1"/>
        <end position="427" status="greater than"/>
    </location>
</feature>
<feature type="binding site" evidence="1">
    <location>
        <begin position="160"/>
        <end position="167"/>
    </location>
    <ligand>
        <name>ATP</name>
        <dbReference type="ChEBI" id="CHEBI:30616"/>
    </ligand>
</feature>
<feature type="non-terminal residue">
    <location>
        <position position="427"/>
    </location>
</feature>
<dbReference type="EC" id="7.1.2.2" evidence="1"/>
<dbReference type="EMBL" id="X76878">
    <property type="protein sequence ID" value="CAA54205.1"/>
    <property type="molecule type" value="Genomic_DNA"/>
</dbReference>
<dbReference type="PIR" id="T10475">
    <property type="entry name" value="T10475"/>
</dbReference>
<dbReference type="SMR" id="P42467"/>
<dbReference type="STRING" id="2741.SAMN04489866_103112"/>
<dbReference type="GO" id="GO:0005886">
    <property type="term" value="C:plasma membrane"/>
    <property type="evidence" value="ECO:0007669"/>
    <property type="project" value="UniProtKB-SubCell"/>
</dbReference>
<dbReference type="GO" id="GO:0045259">
    <property type="term" value="C:proton-transporting ATP synthase complex"/>
    <property type="evidence" value="ECO:0007669"/>
    <property type="project" value="UniProtKB-KW"/>
</dbReference>
<dbReference type="GO" id="GO:0005524">
    <property type="term" value="F:ATP binding"/>
    <property type="evidence" value="ECO:0007669"/>
    <property type="project" value="UniProtKB-KW"/>
</dbReference>
<dbReference type="GO" id="GO:0016887">
    <property type="term" value="F:ATP hydrolysis activity"/>
    <property type="evidence" value="ECO:0007669"/>
    <property type="project" value="InterPro"/>
</dbReference>
<dbReference type="GO" id="GO:0046933">
    <property type="term" value="F:proton-transporting ATP synthase activity, rotational mechanism"/>
    <property type="evidence" value="ECO:0007669"/>
    <property type="project" value="InterPro"/>
</dbReference>
<dbReference type="CDD" id="cd18115">
    <property type="entry name" value="ATP-synt_F1_beta_N"/>
    <property type="match status" value="1"/>
</dbReference>
<dbReference type="CDD" id="cd01133">
    <property type="entry name" value="F1-ATPase_beta_CD"/>
    <property type="match status" value="1"/>
</dbReference>
<dbReference type="FunFam" id="3.40.50.300:FF:000004">
    <property type="entry name" value="ATP synthase subunit beta"/>
    <property type="match status" value="1"/>
</dbReference>
<dbReference type="Gene3D" id="2.40.10.170">
    <property type="match status" value="1"/>
</dbReference>
<dbReference type="Gene3D" id="1.10.1140.10">
    <property type="entry name" value="Bovine Mitochondrial F1-atpase, Atp Synthase Beta Chain, Chain D, domain 3"/>
    <property type="match status" value="1"/>
</dbReference>
<dbReference type="Gene3D" id="3.40.50.300">
    <property type="entry name" value="P-loop containing nucleotide triphosphate hydrolases"/>
    <property type="match status" value="1"/>
</dbReference>
<dbReference type="HAMAP" id="MF_01347">
    <property type="entry name" value="ATP_synth_beta_bact"/>
    <property type="match status" value="1"/>
</dbReference>
<dbReference type="InterPro" id="IPR003593">
    <property type="entry name" value="AAA+_ATPase"/>
</dbReference>
<dbReference type="InterPro" id="IPR055190">
    <property type="entry name" value="ATP-synt_VA_C"/>
</dbReference>
<dbReference type="InterPro" id="IPR005722">
    <property type="entry name" value="ATP_synth_F1_bsu"/>
</dbReference>
<dbReference type="InterPro" id="IPR020003">
    <property type="entry name" value="ATPase_a/bsu_AS"/>
</dbReference>
<dbReference type="InterPro" id="IPR050053">
    <property type="entry name" value="ATPase_alpha/beta_chains"/>
</dbReference>
<dbReference type="InterPro" id="IPR004100">
    <property type="entry name" value="ATPase_F1/V1/A1_a/bsu_N"/>
</dbReference>
<dbReference type="InterPro" id="IPR036121">
    <property type="entry name" value="ATPase_F1/V1/A1_a/bsu_N_sf"/>
</dbReference>
<dbReference type="InterPro" id="IPR000194">
    <property type="entry name" value="ATPase_F1/V1/A1_a/bsu_nucl-bd"/>
</dbReference>
<dbReference type="InterPro" id="IPR024034">
    <property type="entry name" value="ATPase_F1/V1_b/a_C"/>
</dbReference>
<dbReference type="InterPro" id="IPR027417">
    <property type="entry name" value="P-loop_NTPase"/>
</dbReference>
<dbReference type="NCBIfam" id="TIGR01039">
    <property type="entry name" value="atpD"/>
    <property type="match status" value="1"/>
</dbReference>
<dbReference type="PANTHER" id="PTHR15184">
    <property type="entry name" value="ATP SYNTHASE"/>
    <property type="match status" value="1"/>
</dbReference>
<dbReference type="PANTHER" id="PTHR15184:SF71">
    <property type="entry name" value="ATP SYNTHASE SUBUNIT BETA, MITOCHONDRIAL"/>
    <property type="match status" value="1"/>
</dbReference>
<dbReference type="Pfam" id="PF00006">
    <property type="entry name" value="ATP-synt_ab"/>
    <property type="match status" value="1"/>
</dbReference>
<dbReference type="Pfam" id="PF02874">
    <property type="entry name" value="ATP-synt_ab_N"/>
    <property type="match status" value="1"/>
</dbReference>
<dbReference type="Pfam" id="PF22919">
    <property type="entry name" value="ATP-synt_VA_C"/>
    <property type="match status" value="1"/>
</dbReference>
<dbReference type="SMART" id="SM00382">
    <property type="entry name" value="AAA"/>
    <property type="match status" value="1"/>
</dbReference>
<dbReference type="SUPFAM" id="SSF47917">
    <property type="entry name" value="C-terminal domain of alpha and beta subunits of F1 ATP synthase"/>
    <property type="match status" value="1"/>
</dbReference>
<dbReference type="SUPFAM" id="SSF50615">
    <property type="entry name" value="N-terminal domain of alpha and beta subunits of F1 ATP synthase"/>
    <property type="match status" value="1"/>
</dbReference>
<dbReference type="SUPFAM" id="SSF52540">
    <property type="entry name" value="P-loop containing nucleoside triphosphate hydrolases"/>
    <property type="match status" value="1"/>
</dbReference>
<dbReference type="PROSITE" id="PS00152">
    <property type="entry name" value="ATPASE_ALPHA_BETA"/>
    <property type="match status" value="1"/>
</dbReference>
<proteinExistence type="inferred from homology"/>
<keyword id="KW-0066">ATP synthesis</keyword>
<keyword id="KW-0067">ATP-binding</keyword>
<keyword id="KW-1003">Cell membrane</keyword>
<keyword id="KW-0139">CF(1)</keyword>
<keyword id="KW-0375">Hydrogen ion transport</keyword>
<keyword id="KW-0406">Ion transport</keyword>
<keyword id="KW-0472">Membrane</keyword>
<keyword id="KW-0547">Nucleotide-binding</keyword>
<keyword id="KW-1278">Translocase</keyword>
<keyword id="KW-0813">Transport</keyword>